<sequence length="951" mass="110484">MLGSMARKKPRNTSRLPLALNPLKSKDVLAVLAERNEAIVPVGAWVEPASPGSSEIPAYTSAYLIEEELKEQLRKKQEALKHFQKQVKYRVNQQIRLRKKQQLQKSYERAQKEGSIAMQSSATHLTSKRTSVFPNNLNVAIGSSRLPPSLMPGDGIEDEENQNELFQQQAQALSETMKQARHRLASFKTVIKKKGSVFPDDGRKSFLTREEVLSRKPASTGINTGIRGELPIKVHQGLLAAVPYQNYMENQELDYEEPDYEESSSLVTDEKGKEDLFGRGQQDQQAIHSEDKNKPFSRVQKVKFKNPLFVLMEEEEQKQLHFEGLQDILPEAQDYFLEAQGDLLETQGDLTGIQSVKPDTQAVEMKVQVTEPEGQAIEPEGQPIKTETQGIMLKAQSIELEEGSIVLKTQDFLPTNQALLTKNQDVLLKDHCVLPKDQSILLKYQDQDFLPRDQHVLHKDQDILPKYQDQNFLPKDQNFLSRDQHVLPKDQDILPKYQDQNFLPKDQNFLSRDQHVLPKDQNILPKYQGQDFLPKDQDFLSRDQHVLPKDWNILPKCQDQDFLPRDQGVLPKDQNILPICQDQDFLPRDQGYLPKDQNILPICQDRDFLPRDLHVLSNDQNILPKCQDQDFLPKYQKVHFKEPYSDMTDEKGREDFSLADYQCLPPKSQDQDDIKNQQPASFMREERVREELPLDYHQYVVPKIQDQDSPREQNKHIKLPSSFEKWEIARGNTPGVPLAYDRYQSGLSTEFQAPLAFQSDVDKEEDKKERQKQYLRHRRLFMDIEREQVKEQQRQKEQKKKIEKIKKKREQECYAAEQRILRMNFHEDPYSGEKLSEILAQLQLQEIKGTREKQQREKEYLRYVEALRAQIQEKMQLYNITLPPLCCCGPDFWDAHPDTCANNCIFYKNHRAYTRALHSFINSCDVPGGNSTLRVAIHNFASAHRRTLKNL</sequence>
<evidence type="ECO:0000255" key="1"/>
<evidence type="ECO:0000269" key="2">
    <source>
    </source>
</evidence>
<evidence type="ECO:0000269" key="3">
    <source>
    </source>
</evidence>
<evidence type="ECO:0000305" key="4"/>
<feature type="chain" id="PRO_0000307715" description="Coiled-coil domain-containing protein 15">
    <location>
        <begin position="1"/>
        <end position="951"/>
    </location>
</feature>
<feature type="coiled-coil region" evidence="1">
    <location>
        <begin position="64"/>
        <end position="89"/>
    </location>
</feature>
<feature type="coiled-coil region" evidence="1">
    <location>
        <begin position="154"/>
        <end position="193"/>
    </location>
</feature>
<feature type="coiled-coil region" evidence="1">
    <location>
        <begin position="782"/>
        <end position="813"/>
    </location>
</feature>
<feature type="coiled-coil region" evidence="1">
    <location>
        <begin position="839"/>
        <end position="874"/>
    </location>
</feature>
<feature type="sequence variant" id="VAR_069401" evidence="2">
    <original>F</original>
    <variation>C</variation>
    <location>
        <position position="166"/>
    </location>
</feature>
<feature type="sequence variant" id="VAR_050748" description="In dbSNP:rs4936966.">
    <original>G</original>
    <variation>D</variation>
    <location>
        <position position="529"/>
    </location>
</feature>
<feature type="sequence variant" id="VAR_050749" description="In dbSNP:rs7107487.">
    <original>C</original>
    <variation>R</variation>
    <location>
        <position position="813"/>
    </location>
</feature>
<feature type="sequence conflict" description="In Ref. 3; BAB14504." evidence="4" ref="3">
    <original>K</original>
    <variation>R</variation>
    <location>
        <position position="385"/>
    </location>
</feature>
<feature type="sequence conflict" description="In Ref. 3; BAB14504." evidence="4" ref="3">
    <original>L</original>
    <variation>P</variation>
    <location>
        <position position="450"/>
    </location>
</feature>
<organism>
    <name type="scientific">Homo sapiens</name>
    <name type="common">Human</name>
    <dbReference type="NCBI Taxonomy" id="9606"/>
    <lineage>
        <taxon>Eukaryota</taxon>
        <taxon>Metazoa</taxon>
        <taxon>Chordata</taxon>
        <taxon>Craniata</taxon>
        <taxon>Vertebrata</taxon>
        <taxon>Euteleostomi</taxon>
        <taxon>Mammalia</taxon>
        <taxon>Eutheria</taxon>
        <taxon>Euarchontoglires</taxon>
        <taxon>Primates</taxon>
        <taxon>Haplorrhini</taxon>
        <taxon>Catarrhini</taxon>
        <taxon>Hominidae</taxon>
        <taxon>Homo</taxon>
    </lineage>
</organism>
<dbReference type="EMBL" id="AP003501">
    <property type="status" value="NOT_ANNOTATED_CDS"/>
    <property type="molecule type" value="Genomic_DNA"/>
</dbReference>
<dbReference type="EMBL" id="BC018540">
    <property type="protein sequence ID" value="AAH18540.1"/>
    <property type="status" value="ALT_SEQ"/>
    <property type="molecule type" value="mRNA"/>
</dbReference>
<dbReference type="EMBL" id="AK023277">
    <property type="protein sequence ID" value="BAB14504.1"/>
    <property type="molecule type" value="mRNA"/>
</dbReference>
<dbReference type="CCDS" id="CCDS44756.1"/>
<dbReference type="RefSeq" id="NP_079280.2">
    <property type="nucleotide sequence ID" value="NM_025004.3"/>
</dbReference>
<dbReference type="SMR" id="Q0P6D6"/>
<dbReference type="BioGRID" id="123101">
    <property type="interactions" value="12"/>
</dbReference>
<dbReference type="FunCoup" id="Q0P6D6">
    <property type="interactions" value="381"/>
</dbReference>
<dbReference type="IntAct" id="Q0P6D6">
    <property type="interactions" value="3"/>
</dbReference>
<dbReference type="MINT" id="Q0P6D6"/>
<dbReference type="STRING" id="9606.ENSP00000341684"/>
<dbReference type="iPTMnet" id="Q0P6D6"/>
<dbReference type="PhosphoSitePlus" id="Q0P6D6"/>
<dbReference type="BioMuta" id="CCDC15"/>
<dbReference type="DMDM" id="160017591"/>
<dbReference type="jPOST" id="Q0P6D6"/>
<dbReference type="MassIVE" id="Q0P6D6"/>
<dbReference type="PaxDb" id="9606-ENSP00000341684"/>
<dbReference type="PeptideAtlas" id="Q0P6D6"/>
<dbReference type="ProteomicsDB" id="58778"/>
<dbReference type="Antibodypedia" id="50022">
    <property type="antibodies" value="71 antibodies from 15 providers"/>
</dbReference>
<dbReference type="DNASU" id="80071"/>
<dbReference type="Ensembl" id="ENST00000344762.6">
    <property type="protein sequence ID" value="ENSP00000341684.5"/>
    <property type="gene ID" value="ENSG00000149548.15"/>
</dbReference>
<dbReference type="GeneID" id="80071"/>
<dbReference type="KEGG" id="hsa:80071"/>
<dbReference type="MANE-Select" id="ENST00000344762.6">
    <property type="protein sequence ID" value="ENSP00000341684.5"/>
    <property type="RefSeq nucleotide sequence ID" value="NM_025004.3"/>
    <property type="RefSeq protein sequence ID" value="NP_079280.2"/>
</dbReference>
<dbReference type="UCSC" id="uc001qbm.6">
    <property type="organism name" value="human"/>
</dbReference>
<dbReference type="AGR" id="HGNC:25798"/>
<dbReference type="CTD" id="80071"/>
<dbReference type="DisGeNET" id="80071"/>
<dbReference type="GeneCards" id="CCDC15"/>
<dbReference type="HGNC" id="HGNC:25798">
    <property type="gene designation" value="CCDC15"/>
</dbReference>
<dbReference type="HPA" id="ENSG00000149548">
    <property type="expression patterns" value="Tissue enhanced (testis)"/>
</dbReference>
<dbReference type="neXtProt" id="NX_Q0P6D6"/>
<dbReference type="OpenTargets" id="ENSG00000149548"/>
<dbReference type="PharmGKB" id="PA142672175"/>
<dbReference type="VEuPathDB" id="HostDB:ENSG00000149548"/>
<dbReference type="eggNOG" id="ENOG502QU35">
    <property type="taxonomic scope" value="Eukaryota"/>
</dbReference>
<dbReference type="GeneTree" id="ENSGT00500000044966"/>
<dbReference type="InParanoid" id="Q0P6D6"/>
<dbReference type="OMA" id="EAQDYFP"/>
<dbReference type="OrthoDB" id="10007210at2759"/>
<dbReference type="PAN-GO" id="Q0P6D6">
    <property type="GO annotations" value="1 GO annotation based on evolutionary models"/>
</dbReference>
<dbReference type="PhylomeDB" id="Q0P6D6"/>
<dbReference type="TreeFam" id="TF329047"/>
<dbReference type="PathwayCommons" id="Q0P6D6"/>
<dbReference type="SignaLink" id="Q0P6D6"/>
<dbReference type="BioGRID-ORCS" id="80071">
    <property type="hits" value="17 hits in 1160 CRISPR screens"/>
</dbReference>
<dbReference type="GenomeRNAi" id="80071"/>
<dbReference type="Pharos" id="Q0P6D6">
    <property type="development level" value="Tdark"/>
</dbReference>
<dbReference type="PRO" id="PR:Q0P6D6"/>
<dbReference type="Proteomes" id="UP000005640">
    <property type="component" value="Chromosome 11"/>
</dbReference>
<dbReference type="RNAct" id="Q0P6D6">
    <property type="molecule type" value="protein"/>
</dbReference>
<dbReference type="Bgee" id="ENSG00000149548">
    <property type="expression patterns" value="Expressed in oocyte and 122 other cell types or tissues"/>
</dbReference>
<dbReference type="ExpressionAtlas" id="Q0P6D6">
    <property type="expression patterns" value="baseline and differential"/>
</dbReference>
<dbReference type="GO" id="GO:0034451">
    <property type="term" value="C:centriolar satellite"/>
    <property type="evidence" value="ECO:0007669"/>
    <property type="project" value="UniProtKB-SubCell"/>
</dbReference>
<dbReference type="GO" id="GO:0005814">
    <property type="term" value="C:centriole"/>
    <property type="evidence" value="ECO:0000314"/>
    <property type="project" value="UniProtKB"/>
</dbReference>
<dbReference type="GO" id="GO:0005813">
    <property type="term" value="C:centrosome"/>
    <property type="evidence" value="ECO:0000314"/>
    <property type="project" value="UniProtKB"/>
</dbReference>
<dbReference type="GO" id="GO:0005737">
    <property type="term" value="C:cytoplasm"/>
    <property type="evidence" value="ECO:0007669"/>
    <property type="project" value="UniProtKB-KW"/>
</dbReference>
<dbReference type="GO" id="GO:0060271">
    <property type="term" value="P:cilium assembly"/>
    <property type="evidence" value="ECO:0000315"/>
    <property type="project" value="UniProtKB"/>
</dbReference>
<dbReference type="GO" id="GO:1903724">
    <property type="term" value="P:positive regulation of centriole elongation"/>
    <property type="evidence" value="ECO:0000315"/>
    <property type="project" value="UniProtKB"/>
</dbReference>
<dbReference type="InterPro" id="IPR037693">
    <property type="entry name" value="CCDC15"/>
</dbReference>
<dbReference type="PANTHER" id="PTHR14817">
    <property type="entry name" value="COILED-COIL DOMAIN-CONTAINING PROTEIN 15"/>
    <property type="match status" value="1"/>
</dbReference>
<dbReference type="PANTHER" id="PTHR14817:SF2">
    <property type="entry name" value="COILED-COIL DOMAIN-CONTAINING PROTEIN 15"/>
    <property type="match status" value="1"/>
</dbReference>
<comment type="function">
    <text evidence="3">Plays an important role in primary cilium assembly, maintenance, and length regulation. Interacts with centriole inner scaffold proteins to promote proper centriole size and integrity and assembly of functional cilia. Required for the recruitment of both the inner scaffold protein POC1B and the distal SFI1/CETN2 complex to centrioles.</text>
</comment>
<comment type="subunit">
    <text evidence="3">Interacts with POC5, POC1B, CETN2 and FAM161A.</text>
</comment>
<comment type="subcellular location">
    <subcellularLocation>
        <location evidence="3">Cytoplasm</location>
        <location evidence="3">Cytoskeleton</location>
        <location evidence="3">Microtubule organizing center</location>
        <location evidence="3">Centrosome</location>
    </subcellularLocation>
    <subcellularLocation>
        <location evidence="3">Cytoplasm</location>
        <location evidence="3">Cytoskeleton</location>
        <location evidence="3">Microtubule organizing center</location>
        <location evidence="3">Centrosome</location>
        <location evidence="3">Centriole</location>
    </subcellularLocation>
    <subcellularLocation>
        <location evidence="3">Cytoplasm</location>
        <location evidence="3">Cytoskeleton</location>
        <location evidence="3">Microtubule organizing center</location>
        <location evidence="3">Centrosome</location>
        <location evidence="3">Centriolar satellite</location>
    </subcellularLocation>
    <text evidence="3">Localizes to the inner scaffold in the central region of centrioles.</text>
</comment>
<comment type="sequence caution" evidence="4">
    <conflict type="miscellaneous discrepancy">
        <sequence resource="EMBL-CDS" id="AAH18540"/>
    </conflict>
    <text>Contaminating sequence. Potential poly-A sequence.</text>
</comment>
<keyword id="KW-0970">Cilium biogenesis/degradation</keyword>
<keyword id="KW-0175">Coiled coil</keyword>
<keyword id="KW-0963">Cytoplasm</keyword>
<keyword id="KW-0206">Cytoskeleton</keyword>
<keyword id="KW-1267">Proteomics identification</keyword>
<keyword id="KW-1185">Reference proteome</keyword>
<proteinExistence type="evidence at protein level"/>
<gene>
    <name type="primary">CCDC15</name>
</gene>
<protein>
    <recommendedName>
        <fullName>Coiled-coil domain-containing protein 15</fullName>
    </recommendedName>
</protein>
<accession>Q0P6D6</accession>
<accession>Q9H8U7</accession>
<name>CCD15_HUMAN</name>
<reference key="1">
    <citation type="journal article" date="2006" name="Nature">
        <title>Human chromosome 11 DNA sequence and analysis including novel gene identification.</title>
        <authorList>
            <person name="Taylor T.D."/>
            <person name="Noguchi H."/>
            <person name="Totoki Y."/>
            <person name="Toyoda A."/>
            <person name="Kuroki Y."/>
            <person name="Dewar K."/>
            <person name="Lloyd C."/>
            <person name="Itoh T."/>
            <person name="Takeda T."/>
            <person name="Kim D.-W."/>
            <person name="She X."/>
            <person name="Barlow K.F."/>
            <person name="Bloom T."/>
            <person name="Bruford E."/>
            <person name="Chang J.L."/>
            <person name="Cuomo C.A."/>
            <person name="Eichler E."/>
            <person name="FitzGerald M.G."/>
            <person name="Jaffe D.B."/>
            <person name="LaButti K."/>
            <person name="Nicol R."/>
            <person name="Park H.-S."/>
            <person name="Seaman C."/>
            <person name="Sougnez C."/>
            <person name="Yang X."/>
            <person name="Zimmer A.R."/>
            <person name="Zody M.C."/>
            <person name="Birren B.W."/>
            <person name="Nusbaum C."/>
            <person name="Fujiyama A."/>
            <person name="Hattori M."/>
            <person name="Rogers J."/>
            <person name="Lander E.S."/>
            <person name="Sakaki Y."/>
        </authorList>
    </citation>
    <scope>NUCLEOTIDE SEQUENCE [LARGE SCALE GENOMIC DNA]</scope>
</reference>
<reference key="2">
    <citation type="journal article" date="2004" name="Genome Res.">
        <title>The status, quality, and expansion of the NIH full-length cDNA project: the Mammalian Gene Collection (MGC).</title>
        <authorList>
            <consortium name="The MGC Project Team"/>
        </authorList>
    </citation>
    <scope>NUCLEOTIDE SEQUENCE [LARGE SCALE MRNA] OF 1-796</scope>
    <source>
        <tissue>Lymph</tissue>
    </source>
</reference>
<reference key="3">
    <citation type="journal article" date="2004" name="Nat. Genet.">
        <title>Complete sequencing and characterization of 21,243 full-length human cDNAs.</title>
        <authorList>
            <person name="Ota T."/>
            <person name="Suzuki Y."/>
            <person name="Nishikawa T."/>
            <person name="Otsuki T."/>
            <person name="Sugiyama T."/>
            <person name="Irie R."/>
            <person name="Wakamatsu A."/>
            <person name="Hayashi K."/>
            <person name="Sato H."/>
            <person name="Nagai K."/>
            <person name="Kimura K."/>
            <person name="Makita H."/>
            <person name="Sekine M."/>
            <person name="Obayashi M."/>
            <person name="Nishi T."/>
            <person name="Shibahara T."/>
            <person name="Tanaka T."/>
            <person name="Ishii S."/>
            <person name="Yamamoto J."/>
            <person name="Saito K."/>
            <person name="Kawai Y."/>
            <person name="Isono Y."/>
            <person name="Nakamura Y."/>
            <person name="Nagahari K."/>
            <person name="Murakami K."/>
            <person name="Yasuda T."/>
            <person name="Iwayanagi T."/>
            <person name="Wagatsuma M."/>
            <person name="Shiratori A."/>
            <person name="Sudo H."/>
            <person name="Hosoiri T."/>
            <person name="Kaku Y."/>
            <person name="Kodaira H."/>
            <person name="Kondo H."/>
            <person name="Sugawara M."/>
            <person name="Takahashi M."/>
            <person name="Kanda K."/>
            <person name="Yokoi T."/>
            <person name="Furuya T."/>
            <person name="Kikkawa E."/>
            <person name="Omura Y."/>
            <person name="Abe K."/>
            <person name="Kamihara K."/>
            <person name="Katsuta N."/>
            <person name="Sato K."/>
            <person name="Tanikawa M."/>
            <person name="Yamazaki M."/>
            <person name="Ninomiya K."/>
            <person name="Ishibashi T."/>
            <person name="Yamashita H."/>
            <person name="Murakawa K."/>
            <person name="Fujimori K."/>
            <person name="Tanai H."/>
            <person name="Kimata M."/>
            <person name="Watanabe M."/>
            <person name="Hiraoka S."/>
            <person name="Chiba Y."/>
            <person name="Ishida S."/>
            <person name="Ono Y."/>
            <person name="Takiguchi S."/>
            <person name="Watanabe S."/>
            <person name="Yosida M."/>
            <person name="Hotuta T."/>
            <person name="Kusano J."/>
            <person name="Kanehori K."/>
            <person name="Takahashi-Fujii A."/>
            <person name="Hara H."/>
            <person name="Tanase T.-O."/>
            <person name="Nomura Y."/>
            <person name="Togiya S."/>
            <person name="Komai F."/>
            <person name="Hara R."/>
            <person name="Takeuchi K."/>
            <person name="Arita M."/>
            <person name="Imose N."/>
            <person name="Musashino K."/>
            <person name="Yuuki H."/>
            <person name="Oshima A."/>
            <person name="Sasaki N."/>
            <person name="Aotsuka S."/>
            <person name="Yoshikawa Y."/>
            <person name="Matsunawa H."/>
            <person name="Ichihara T."/>
            <person name="Shiohata N."/>
            <person name="Sano S."/>
            <person name="Moriya S."/>
            <person name="Momiyama H."/>
            <person name="Satoh N."/>
            <person name="Takami S."/>
            <person name="Terashima Y."/>
            <person name="Suzuki O."/>
            <person name="Nakagawa S."/>
            <person name="Senoh A."/>
            <person name="Mizoguchi H."/>
            <person name="Goto Y."/>
            <person name="Shimizu F."/>
            <person name="Wakebe H."/>
            <person name="Hishigaki H."/>
            <person name="Watanabe T."/>
            <person name="Sugiyama A."/>
            <person name="Takemoto M."/>
            <person name="Kawakami B."/>
            <person name="Yamazaki M."/>
            <person name="Watanabe K."/>
            <person name="Kumagai A."/>
            <person name="Itakura S."/>
            <person name="Fukuzumi Y."/>
            <person name="Fujimori Y."/>
            <person name="Komiyama M."/>
            <person name="Tashiro H."/>
            <person name="Tanigami A."/>
            <person name="Fujiwara T."/>
            <person name="Ono T."/>
            <person name="Yamada K."/>
            <person name="Fujii Y."/>
            <person name="Ozaki K."/>
            <person name="Hirao M."/>
            <person name="Ohmori Y."/>
            <person name="Kawabata A."/>
            <person name="Hikiji T."/>
            <person name="Kobatake N."/>
            <person name="Inagaki H."/>
            <person name="Ikema Y."/>
            <person name="Okamoto S."/>
            <person name="Okitani R."/>
            <person name="Kawakami T."/>
            <person name="Noguchi S."/>
            <person name="Itoh T."/>
            <person name="Shigeta K."/>
            <person name="Senba T."/>
            <person name="Matsumura K."/>
            <person name="Nakajima Y."/>
            <person name="Mizuno T."/>
            <person name="Morinaga M."/>
            <person name="Sasaki M."/>
            <person name="Togashi T."/>
            <person name="Oyama M."/>
            <person name="Hata H."/>
            <person name="Watanabe M."/>
            <person name="Komatsu T."/>
            <person name="Mizushima-Sugano J."/>
            <person name="Satoh T."/>
            <person name="Shirai Y."/>
            <person name="Takahashi Y."/>
            <person name="Nakagawa K."/>
            <person name="Okumura K."/>
            <person name="Nagase T."/>
            <person name="Nomura N."/>
            <person name="Kikuchi H."/>
            <person name="Masuho Y."/>
            <person name="Yamashita R."/>
            <person name="Nakai K."/>
            <person name="Yada T."/>
            <person name="Nakamura Y."/>
            <person name="Ohara O."/>
            <person name="Isogai T."/>
            <person name="Sugano S."/>
        </authorList>
    </citation>
    <scope>NUCLEOTIDE SEQUENCE [LARGE SCALE MRNA] OF 1-465</scope>
</reference>
<reference key="4">
    <citation type="journal article" date="2023" name="J. Cell Biol.">
        <title>CCDC15 localizes to the centriole inner scaffold and controls centriole length and integrity.</title>
        <authorList>
            <person name="Arslanhan M.D."/>
            <person name="Cengiz-Emek S."/>
            <person name="Odabasi E."/>
            <person name="Steib E."/>
            <person name="Hamel V."/>
            <person name="Guichard P."/>
            <person name="Firat-Karalar E.N."/>
        </authorList>
    </citation>
    <scope>FUNCTION</scope>
    <scope>SUBCELLULAR LOCATION</scope>
    <scope>INTERACTION WITH POC5; POC1B; CETN2 AND FAM161A</scope>
</reference>
<reference key="5">
    <citation type="journal article" date="2012" name="N. Engl. J. Med.">
        <title>Diagnostic exome sequencing in persons with severe intellectual disability.</title>
        <authorList>
            <person name="de Ligt J."/>
            <person name="Willemsen M.H."/>
            <person name="van Bon B.W."/>
            <person name="Kleefstra T."/>
            <person name="Yntema H.G."/>
            <person name="Kroes T."/>
            <person name="Vulto-van Silfhout A.T."/>
            <person name="Koolen D.A."/>
            <person name="de Vries P."/>
            <person name="Gilissen C."/>
            <person name="del Rosario M."/>
            <person name="Hoischen A."/>
            <person name="Scheffer H."/>
            <person name="de Vries B.B."/>
            <person name="Brunner H.G."/>
            <person name="Veltman J.A."/>
            <person name="Vissers L.E."/>
        </authorList>
    </citation>
    <scope>VARIANT CYS-166</scope>
</reference>